<feature type="chain" id="PRO_1000117069" description="Ribosomal RNA small subunit methyltransferase G">
    <location>
        <begin position="1"/>
        <end position="207"/>
    </location>
</feature>
<feature type="binding site" evidence="1">
    <location>
        <position position="73"/>
    </location>
    <ligand>
        <name>S-adenosyl-L-methionine</name>
        <dbReference type="ChEBI" id="CHEBI:59789"/>
    </ligand>
</feature>
<feature type="binding site" evidence="1">
    <location>
        <position position="78"/>
    </location>
    <ligand>
        <name>S-adenosyl-L-methionine</name>
        <dbReference type="ChEBI" id="CHEBI:59789"/>
    </ligand>
</feature>
<feature type="binding site" evidence="1">
    <location>
        <begin position="124"/>
        <end position="125"/>
    </location>
    <ligand>
        <name>S-adenosyl-L-methionine</name>
        <dbReference type="ChEBI" id="CHEBI:59789"/>
    </ligand>
</feature>
<feature type="binding site" evidence="1">
    <location>
        <position position="139"/>
    </location>
    <ligand>
        <name>S-adenosyl-L-methionine</name>
        <dbReference type="ChEBI" id="CHEBI:59789"/>
    </ligand>
</feature>
<evidence type="ECO:0000255" key="1">
    <source>
        <dbReference type="HAMAP-Rule" id="MF_00074"/>
    </source>
</evidence>
<protein>
    <recommendedName>
        <fullName evidence="1">Ribosomal RNA small subunit methyltransferase G</fullName>
        <ecNumber evidence="1">2.1.1.170</ecNumber>
    </recommendedName>
    <alternativeName>
        <fullName evidence="1">16S rRNA 7-methylguanosine methyltransferase</fullName>
        <shortName evidence="1">16S rRNA m7G methyltransferase</shortName>
    </alternativeName>
</protein>
<organism>
    <name type="scientific">Escherichia coli O17:K52:H18 (strain UMN026 / ExPEC)</name>
    <dbReference type="NCBI Taxonomy" id="585056"/>
    <lineage>
        <taxon>Bacteria</taxon>
        <taxon>Pseudomonadati</taxon>
        <taxon>Pseudomonadota</taxon>
        <taxon>Gammaproteobacteria</taxon>
        <taxon>Enterobacterales</taxon>
        <taxon>Enterobacteriaceae</taxon>
        <taxon>Escherichia</taxon>
    </lineage>
</organism>
<dbReference type="EC" id="2.1.1.170" evidence="1"/>
<dbReference type="EMBL" id="CU928163">
    <property type="protein sequence ID" value="CAR15410.1"/>
    <property type="molecule type" value="Genomic_DNA"/>
</dbReference>
<dbReference type="RefSeq" id="WP_000932864.1">
    <property type="nucleotide sequence ID" value="NC_011751.1"/>
</dbReference>
<dbReference type="RefSeq" id="YP_002414905.1">
    <property type="nucleotide sequence ID" value="NC_011751.1"/>
</dbReference>
<dbReference type="SMR" id="B7NF56"/>
<dbReference type="STRING" id="585056.ECUMN_4270"/>
<dbReference type="KEGG" id="eum:ECUMN_4270"/>
<dbReference type="PATRIC" id="fig|585056.7.peg.4442"/>
<dbReference type="HOGENOM" id="CLU_065341_2_2_6"/>
<dbReference type="Proteomes" id="UP000007097">
    <property type="component" value="Chromosome"/>
</dbReference>
<dbReference type="GO" id="GO:0005829">
    <property type="term" value="C:cytosol"/>
    <property type="evidence" value="ECO:0007669"/>
    <property type="project" value="TreeGrafter"/>
</dbReference>
<dbReference type="GO" id="GO:0070043">
    <property type="term" value="F:rRNA (guanine-N7-)-methyltransferase activity"/>
    <property type="evidence" value="ECO:0007669"/>
    <property type="project" value="UniProtKB-UniRule"/>
</dbReference>
<dbReference type="CDD" id="cd02440">
    <property type="entry name" value="AdoMet_MTases"/>
    <property type="match status" value="1"/>
</dbReference>
<dbReference type="FunFam" id="3.40.50.150:FF:000032">
    <property type="entry name" value="Ribosomal RNA small subunit methyltransferase G"/>
    <property type="match status" value="1"/>
</dbReference>
<dbReference type="Gene3D" id="3.40.50.150">
    <property type="entry name" value="Vaccinia Virus protein VP39"/>
    <property type="match status" value="1"/>
</dbReference>
<dbReference type="HAMAP" id="MF_00074">
    <property type="entry name" value="16SrRNA_methyltr_G"/>
    <property type="match status" value="1"/>
</dbReference>
<dbReference type="InterPro" id="IPR003682">
    <property type="entry name" value="rRNA_ssu_MeTfrase_G"/>
</dbReference>
<dbReference type="InterPro" id="IPR029063">
    <property type="entry name" value="SAM-dependent_MTases_sf"/>
</dbReference>
<dbReference type="NCBIfam" id="TIGR00138">
    <property type="entry name" value="rsmG_gidB"/>
    <property type="match status" value="1"/>
</dbReference>
<dbReference type="PANTHER" id="PTHR31760">
    <property type="entry name" value="S-ADENOSYL-L-METHIONINE-DEPENDENT METHYLTRANSFERASES SUPERFAMILY PROTEIN"/>
    <property type="match status" value="1"/>
</dbReference>
<dbReference type="PANTHER" id="PTHR31760:SF0">
    <property type="entry name" value="S-ADENOSYL-L-METHIONINE-DEPENDENT METHYLTRANSFERASES SUPERFAMILY PROTEIN"/>
    <property type="match status" value="1"/>
</dbReference>
<dbReference type="Pfam" id="PF02527">
    <property type="entry name" value="GidB"/>
    <property type="match status" value="1"/>
</dbReference>
<dbReference type="PIRSF" id="PIRSF003078">
    <property type="entry name" value="GidB"/>
    <property type="match status" value="1"/>
</dbReference>
<dbReference type="SUPFAM" id="SSF53335">
    <property type="entry name" value="S-adenosyl-L-methionine-dependent methyltransferases"/>
    <property type="match status" value="1"/>
</dbReference>
<reference key="1">
    <citation type="journal article" date="2009" name="PLoS Genet.">
        <title>Organised genome dynamics in the Escherichia coli species results in highly diverse adaptive paths.</title>
        <authorList>
            <person name="Touchon M."/>
            <person name="Hoede C."/>
            <person name="Tenaillon O."/>
            <person name="Barbe V."/>
            <person name="Baeriswyl S."/>
            <person name="Bidet P."/>
            <person name="Bingen E."/>
            <person name="Bonacorsi S."/>
            <person name="Bouchier C."/>
            <person name="Bouvet O."/>
            <person name="Calteau A."/>
            <person name="Chiapello H."/>
            <person name="Clermont O."/>
            <person name="Cruveiller S."/>
            <person name="Danchin A."/>
            <person name="Diard M."/>
            <person name="Dossat C."/>
            <person name="Karoui M.E."/>
            <person name="Frapy E."/>
            <person name="Garry L."/>
            <person name="Ghigo J.M."/>
            <person name="Gilles A.M."/>
            <person name="Johnson J."/>
            <person name="Le Bouguenec C."/>
            <person name="Lescat M."/>
            <person name="Mangenot S."/>
            <person name="Martinez-Jehanne V."/>
            <person name="Matic I."/>
            <person name="Nassif X."/>
            <person name="Oztas S."/>
            <person name="Petit M.A."/>
            <person name="Pichon C."/>
            <person name="Rouy Z."/>
            <person name="Ruf C.S."/>
            <person name="Schneider D."/>
            <person name="Tourret J."/>
            <person name="Vacherie B."/>
            <person name="Vallenet D."/>
            <person name="Medigue C."/>
            <person name="Rocha E.P.C."/>
            <person name="Denamur E."/>
        </authorList>
    </citation>
    <scope>NUCLEOTIDE SEQUENCE [LARGE SCALE GENOMIC DNA]</scope>
    <source>
        <strain>UMN026 / ExPEC</strain>
    </source>
</reference>
<name>RSMG_ECOLU</name>
<gene>
    <name evidence="1" type="primary">rsmG</name>
    <name type="ordered locus">ECUMN_4270</name>
</gene>
<keyword id="KW-0963">Cytoplasm</keyword>
<keyword id="KW-0489">Methyltransferase</keyword>
<keyword id="KW-0698">rRNA processing</keyword>
<keyword id="KW-0949">S-adenosyl-L-methionine</keyword>
<keyword id="KW-0808">Transferase</keyword>
<proteinExistence type="inferred from homology"/>
<sequence>MLNKLTSLLKDAGISLTDHQKNQLIAYVNMLHKWNKAYNLTSVRDPNEMLVRHILDSIVVAPYLQGERFIDVGTGPGLPGIPLSIVRPEAHFTLLDSLGKRVRFLRQVQHELKLENIEPVQSRVEEFPSEPPFDGVISRAFASLNDMVSWCHHLPGEQGRFYALKGQMPEDEIALLPEEYQVESVVKLQVPALDGERHLVVIKANKI</sequence>
<accession>B7NF56</accession>
<comment type="function">
    <text evidence="1">Specifically methylates the N7 position of guanine in position 527 of 16S rRNA.</text>
</comment>
<comment type="catalytic activity">
    <reaction evidence="1">
        <text>guanosine(527) in 16S rRNA + S-adenosyl-L-methionine = N(7)-methylguanosine(527) in 16S rRNA + S-adenosyl-L-homocysteine</text>
        <dbReference type="Rhea" id="RHEA:42732"/>
        <dbReference type="Rhea" id="RHEA-COMP:10209"/>
        <dbReference type="Rhea" id="RHEA-COMP:10210"/>
        <dbReference type="ChEBI" id="CHEBI:57856"/>
        <dbReference type="ChEBI" id="CHEBI:59789"/>
        <dbReference type="ChEBI" id="CHEBI:74269"/>
        <dbReference type="ChEBI" id="CHEBI:74480"/>
        <dbReference type="EC" id="2.1.1.170"/>
    </reaction>
</comment>
<comment type="subcellular location">
    <subcellularLocation>
        <location evidence="1">Cytoplasm</location>
    </subcellularLocation>
</comment>
<comment type="similarity">
    <text evidence="1">Belongs to the methyltransferase superfamily. RNA methyltransferase RsmG family.</text>
</comment>